<organism>
    <name type="scientific">Streptococcus agalactiae serotype V (strain ATCC BAA-611 / 2603 V/R)</name>
    <dbReference type="NCBI Taxonomy" id="208435"/>
    <lineage>
        <taxon>Bacteria</taxon>
        <taxon>Bacillati</taxon>
        <taxon>Bacillota</taxon>
        <taxon>Bacilli</taxon>
        <taxon>Lactobacillales</taxon>
        <taxon>Streptococcaceae</taxon>
        <taxon>Streptococcus</taxon>
    </lineage>
</organism>
<evidence type="ECO:0000255" key="1">
    <source>
        <dbReference type="HAMAP-Rule" id="MF_00145"/>
    </source>
</evidence>
<accession>Q8DXT0</accession>
<comment type="catalytic activity">
    <reaction evidence="1">
        <text>(2R)-3-phosphoglycerate + ATP = (2R)-3-phospho-glyceroyl phosphate + ADP</text>
        <dbReference type="Rhea" id="RHEA:14801"/>
        <dbReference type="ChEBI" id="CHEBI:30616"/>
        <dbReference type="ChEBI" id="CHEBI:57604"/>
        <dbReference type="ChEBI" id="CHEBI:58272"/>
        <dbReference type="ChEBI" id="CHEBI:456216"/>
        <dbReference type="EC" id="2.7.2.3"/>
    </reaction>
</comment>
<comment type="pathway">
    <text evidence="1">Carbohydrate degradation; glycolysis; pyruvate from D-glyceraldehyde 3-phosphate: step 2/5.</text>
</comment>
<comment type="subunit">
    <text evidence="1">Monomer.</text>
</comment>
<comment type="subcellular location">
    <subcellularLocation>
        <location evidence="1">Cytoplasm</location>
    </subcellularLocation>
</comment>
<comment type="similarity">
    <text evidence="1">Belongs to the phosphoglycerate kinase family.</text>
</comment>
<dbReference type="EC" id="2.7.2.3" evidence="1"/>
<dbReference type="EMBL" id="AE009948">
    <property type="protein sequence ID" value="AAN00629.1"/>
    <property type="molecule type" value="Genomic_DNA"/>
</dbReference>
<dbReference type="RefSeq" id="NP_688756.1">
    <property type="nucleotide sequence ID" value="NC_004116.1"/>
</dbReference>
<dbReference type="RefSeq" id="WP_001096753.1">
    <property type="nucleotide sequence ID" value="NC_004116.1"/>
</dbReference>
<dbReference type="SMR" id="Q8DXT0"/>
<dbReference type="STRING" id="208435.SAG1766"/>
<dbReference type="MoonProt" id="Q8DXT0"/>
<dbReference type="KEGG" id="sag:SAG1766"/>
<dbReference type="PATRIC" id="fig|208435.3.peg.1772"/>
<dbReference type="HOGENOM" id="CLU_025427_0_1_9"/>
<dbReference type="OrthoDB" id="9808460at2"/>
<dbReference type="UniPathway" id="UPA00109">
    <property type="reaction ID" value="UER00185"/>
</dbReference>
<dbReference type="Proteomes" id="UP000000821">
    <property type="component" value="Chromosome"/>
</dbReference>
<dbReference type="GO" id="GO:0005829">
    <property type="term" value="C:cytosol"/>
    <property type="evidence" value="ECO:0007669"/>
    <property type="project" value="TreeGrafter"/>
</dbReference>
<dbReference type="GO" id="GO:0043531">
    <property type="term" value="F:ADP binding"/>
    <property type="evidence" value="ECO:0007669"/>
    <property type="project" value="TreeGrafter"/>
</dbReference>
<dbReference type="GO" id="GO:0005524">
    <property type="term" value="F:ATP binding"/>
    <property type="evidence" value="ECO:0007669"/>
    <property type="project" value="UniProtKB-KW"/>
</dbReference>
<dbReference type="GO" id="GO:0004618">
    <property type="term" value="F:phosphoglycerate kinase activity"/>
    <property type="evidence" value="ECO:0007669"/>
    <property type="project" value="UniProtKB-UniRule"/>
</dbReference>
<dbReference type="GO" id="GO:0006094">
    <property type="term" value="P:gluconeogenesis"/>
    <property type="evidence" value="ECO:0007669"/>
    <property type="project" value="TreeGrafter"/>
</dbReference>
<dbReference type="GO" id="GO:0006096">
    <property type="term" value="P:glycolytic process"/>
    <property type="evidence" value="ECO:0007669"/>
    <property type="project" value="UniProtKB-UniRule"/>
</dbReference>
<dbReference type="FunFam" id="3.40.50.1260:FF:000001">
    <property type="entry name" value="Phosphoglycerate kinase"/>
    <property type="match status" value="1"/>
</dbReference>
<dbReference type="FunFam" id="3.40.50.1260:FF:000008">
    <property type="entry name" value="Phosphoglycerate kinase"/>
    <property type="match status" value="1"/>
</dbReference>
<dbReference type="Gene3D" id="3.40.50.1260">
    <property type="entry name" value="Phosphoglycerate kinase, N-terminal domain"/>
    <property type="match status" value="2"/>
</dbReference>
<dbReference type="HAMAP" id="MF_00145">
    <property type="entry name" value="Phosphoglyc_kinase"/>
    <property type="match status" value="1"/>
</dbReference>
<dbReference type="InterPro" id="IPR001576">
    <property type="entry name" value="Phosphoglycerate_kinase"/>
</dbReference>
<dbReference type="InterPro" id="IPR015911">
    <property type="entry name" value="Phosphoglycerate_kinase_CS"/>
</dbReference>
<dbReference type="InterPro" id="IPR015824">
    <property type="entry name" value="Phosphoglycerate_kinase_N"/>
</dbReference>
<dbReference type="InterPro" id="IPR036043">
    <property type="entry name" value="Phosphoglycerate_kinase_sf"/>
</dbReference>
<dbReference type="PANTHER" id="PTHR11406">
    <property type="entry name" value="PHOSPHOGLYCERATE KINASE"/>
    <property type="match status" value="1"/>
</dbReference>
<dbReference type="PANTHER" id="PTHR11406:SF23">
    <property type="entry name" value="PHOSPHOGLYCERATE KINASE 1, CHLOROPLASTIC-RELATED"/>
    <property type="match status" value="1"/>
</dbReference>
<dbReference type="Pfam" id="PF00162">
    <property type="entry name" value="PGK"/>
    <property type="match status" value="1"/>
</dbReference>
<dbReference type="PIRSF" id="PIRSF000724">
    <property type="entry name" value="Pgk"/>
    <property type="match status" value="1"/>
</dbReference>
<dbReference type="PRINTS" id="PR00477">
    <property type="entry name" value="PHGLYCKINASE"/>
</dbReference>
<dbReference type="SUPFAM" id="SSF53748">
    <property type="entry name" value="Phosphoglycerate kinase"/>
    <property type="match status" value="1"/>
</dbReference>
<dbReference type="PROSITE" id="PS00111">
    <property type="entry name" value="PGLYCERATE_KINASE"/>
    <property type="match status" value="1"/>
</dbReference>
<proteinExistence type="inferred from homology"/>
<gene>
    <name evidence="1" type="primary">pgk</name>
    <name type="ordered locus">SAG1766</name>
</gene>
<feature type="chain" id="PRO_0000146011" description="Phosphoglycerate kinase">
    <location>
        <begin position="1"/>
        <end position="398"/>
    </location>
</feature>
<feature type="binding site" evidence="1">
    <location>
        <begin position="21"/>
        <end position="23"/>
    </location>
    <ligand>
        <name>substrate</name>
    </ligand>
</feature>
<feature type="binding site" evidence="1">
    <location>
        <position position="36"/>
    </location>
    <ligand>
        <name>substrate</name>
    </ligand>
</feature>
<feature type="binding site" evidence="1">
    <location>
        <begin position="59"/>
        <end position="62"/>
    </location>
    <ligand>
        <name>substrate</name>
    </ligand>
</feature>
<feature type="binding site" evidence="1">
    <location>
        <position position="119"/>
    </location>
    <ligand>
        <name>substrate</name>
    </ligand>
</feature>
<feature type="binding site" evidence="1">
    <location>
        <position position="157"/>
    </location>
    <ligand>
        <name>substrate</name>
    </ligand>
</feature>
<feature type="binding site" evidence="1">
    <location>
        <position position="208"/>
    </location>
    <ligand>
        <name>ATP</name>
        <dbReference type="ChEBI" id="CHEBI:30616"/>
    </ligand>
</feature>
<feature type="binding site" evidence="1">
    <location>
        <position position="296"/>
    </location>
    <ligand>
        <name>ATP</name>
        <dbReference type="ChEBI" id="CHEBI:30616"/>
    </ligand>
</feature>
<feature type="binding site" evidence="1">
    <location>
        <position position="327"/>
    </location>
    <ligand>
        <name>ATP</name>
        <dbReference type="ChEBI" id="CHEBI:30616"/>
    </ligand>
</feature>
<feature type="binding site" evidence="1">
    <location>
        <begin position="354"/>
        <end position="357"/>
    </location>
    <ligand>
        <name>ATP</name>
        <dbReference type="ChEBI" id="CHEBI:30616"/>
    </ligand>
</feature>
<reference key="1">
    <citation type="journal article" date="2002" name="Proc. Natl. Acad. Sci. U.S.A.">
        <title>Complete genome sequence and comparative genomic analysis of an emerging human pathogen, serotype V Streptococcus agalactiae.</title>
        <authorList>
            <person name="Tettelin H."/>
            <person name="Masignani V."/>
            <person name="Cieslewicz M.J."/>
            <person name="Eisen J.A."/>
            <person name="Peterson S.N."/>
            <person name="Wessels M.R."/>
            <person name="Paulsen I.T."/>
            <person name="Nelson K.E."/>
            <person name="Margarit I."/>
            <person name="Read T.D."/>
            <person name="Madoff L.C."/>
            <person name="Wolf A.M."/>
            <person name="Beanan M.J."/>
            <person name="Brinkac L.M."/>
            <person name="Daugherty S.C."/>
            <person name="DeBoy R.T."/>
            <person name="Durkin A.S."/>
            <person name="Kolonay J.F."/>
            <person name="Madupu R."/>
            <person name="Lewis M.R."/>
            <person name="Radune D."/>
            <person name="Fedorova N.B."/>
            <person name="Scanlan D."/>
            <person name="Khouri H.M."/>
            <person name="Mulligan S."/>
            <person name="Carty H.A."/>
            <person name="Cline R.T."/>
            <person name="Van Aken S.E."/>
            <person name="Gill J."/>
            <person name="Scarselli M."/>
            <person name="Mora M."/>
            <person name="Iacobini E.T."/>
            <person name="Brettoni C."/>
            <person name="Galli G."/>
            <person name="Mariani M."/>
            <person name="Vegni F."/>
            <person name="Maione D."/>
            <person name="Rinaudo D."/>
            <person name="Rappuoli R."/>
            <person name="Telford J.L."/>
            <person name="Kasper D.L."/>
            <person name="Grandi G."/>
            <person name="Fraser C.M."/>
        </authorList>
    </citation>
    <scope>NUCLEOTIDE SEQUENCE [LARGE SCALE GENOMIC DNA]</scope>
    <source>
        <strain>ATCC BAA-611 / 2603 V/R</strain>
    </source>
</reference>
<keyword id="KW-0067">ATP-binding</keyword>
<keyword id="KW-0963">Cytoplasm</keyword>
<keyword id="KW-0324">Glycolysis</keyword>
<keyword id="KW-0418">Kinase</keyword>
<keyword id="KW-0547">Nucleotide-binding</keyword>
<keyword id="KW-1185">Reference proteome</keyword>
<keyword id="KW-0808">Transferase</keyword>
<protein>
    <recommendedName>
        <fullName evidence="1">Phosphoglycerate kinase</fullName>
        <ecNumber evidence="1">2.7.2.3</ecNumber>
    </recommendedName>
</protein>
<sequence length="398" mass="42114">MAKLTVKDVDLKGKKVLVRVDFNVPLKDGVITNDNRITAALPTIKYIIEQGGRAILFSHLGRVKEEADKEGKSLAPVAADLAAKLGQDVVFPGVTRGAKLEEAINALEDGQVLLVENTRFEDVDGKKESKNDEELGKYWASLGDGIFVNDAFGTAHRAHASNVGISANVEKAVAGFLLENEIAYIQEAVETPERPFVAILGGSKVSDKIGVIENLLEKADKVLIGGGMTYTFYKAQGIEIGNSLVEEDKLDVAKDLLEKSNGKLILPVDSKEANAFAGYTEVRDTEGEAVSEGFLGLDIGPKSIAKFDEALTGAKTVVWNGPMGVFENPDFQAGTIGVMDAIVKQPGVKSIIGGGDSAAAAINLGRADKFSWISTGGGASMELLEGKVLPGLAALTEK</sequence>
<name>PGK_STRA5</name>